<accession>A2C3N0</accession>
<organism>
    <name type="scientific">Prochlorococcus marinus (strain NATL1A)</name>
    <dbReference type="NCBI Taxonomy" id="167555"/>
    <lineage>
        <taxon>Bacteria</taxon>
        <taxon>Bacillati</taxon>
        <taxon>Cyanobacteriota</taxon>
        <taxon>Cyanophyceae</taxon>
        <taxon>Synechococcales</taxon>
        <taxon>Prochlorococcaceae</taxon>
        <taxon>Prochlorococcus</taxon>
    </lineage>
</organism>
<name>RUVC_PROM1</name>
<sequence>MRIIGIDPGLARVGYGIIDEIEGKKIMIDCGIIETKSTKKEEERLVEISNDLSSIIKKWNPNSAAVEKFFFYRSSTTISVVQARGVIMMTLGKYKLPIQEFPPMQIKLAVTGYGHSDKNEVLNCVMHELSITSPPKPDDAADALAIALTGIYLK</sequence>
<feature type="chain" id="PRO_1000002793" description="Crossover junction endodeoxyribonuclease RuvC">
    <location>
        <begin position="1"/>
        <end position="154"/>
    </location>
</feature>
<feature type="active site" evidence="1">
    <location>
        <position position="7"/>
    </location>
</feature>
<feature type="active site" evidence="1">
    <location>
        <position position="67"/>
    </location>
</feature>
<feature type="active site" evidence="1">
    <location>
        <position position="139"/>
    </location>
</feature>
<feature type="binding site" evidence="1">
    <location>
        <position position="7"/>
    </location>
    <ligand>
        <name>Mg(2+)</name>
        <dbReference type="ChEBI" id="CHEBI:18420"/>
        <label>1</label>
    </ligand>
</feature>
<feature type="binding site" evidence="1">
    <location>
        <position position="67"/>
    </location>
    <ligand>
        <name>Mg(2+)</name>
        <dbReference type="ChEBI" id="CHEBI:18420"/>
        <label>2</label>
    </ligand>
</feature>
<feature type="binding site" evidence="1">
    <location>
        <position position="139"/>
    </location>
    <ligand>
        <name>Mg(2+)</name>
        <dbReference type="ChEBI" id="CHEBI:18420"/>
        <label>1</label>
    </ligand>
</feature>
<proteinExistence type="inferred from homology"/>
<gene>
    <name evidence="1" type="primary">ruvC</name>
    <name type="ordered locus">NATL1_15331</name>
</gene>
<evidence type="ECO:0000255" key="1">
    <source>
        <dbReference type="HAMAP-Rule" id="MF_00034"/>
    </source>
</evidence>
<comment type="function">
    <text evidence="1">The RuvA-RuvB-RuvC complex processes Holliday junction (HJ) DNA during genetic recombination and DNA repair. Endonuclease that resolves HJ intermediates. Cleaves cruciform DNA by making single-stranded nicks across the HJ at symmetrical positions within the homologous arms, yielding a 5'-phosphate and a 3'-hydroxyl group; requires a central core of homology in the junction. The consensus cleavage sequence is 5'-(A/T)TT(C/G)-3'. Cleavage occurs on the 3'-side of the TT dinucleotide at the point of strand exchange. HJ branch migration catalyzed by RuvA-RuvB allows RuvC to scan DNA until it finds its consensus sequence, where it cleaves and resolves the cruciform DNA.</text>
</comment>
<comment type="catalytic activity">
    <reaction evidence="1">
        <text>Endonucleolytic cleavage at a junction such as a reciprocal single-stranded crossover between two homologous DNA duplexes (Holliday junction).</text>
        <dbReference type="EC" id="3.1.21.10"/>
    </reaction>
</comment>
<comment type="cofactor">
    <cofactor evidence="1">
        <name>Mg(2+)</name>
        <dbReference type="ChEBI" id="CHEBI:18420"/>
    </cofactor>
    <text evidence="1">Binds 2 Mg(2+) ion per subunit.</text>
</comment>
<comment type="subunit">
    <text evidence="1">Homodimer which binds Holliday junction (HJ) DNA. The HJ becomes 2-fold symmetrical on binding to RuvC with unstacked arms; it has a different conformation from HJ DNA in complex with RuvA. In the full resolvosome a probable DNA-RuvA(4)-RuvB(12)-RuvC(2) complex forms which resolves the HJ.</text>
</comment>
<comment type="subcellular location">
    <subcellularLocation>
        <location evidence="1">Cytoplasm</location>
    </subcellularLocation>
</comment>
<comment type="similarity">
    <text evidence="1">Belongs to the RuvC family.</text>
</comment>
<dbReference type="EC" id="3.1.21.10" evidence="1"/>
<dbReference type="EMBL" id="CP000553">
    <property type="protein sequence ID" value="ABM76090.1"/>
    <property type="molecule type" value="Genomic_DNA"/>
</dbReference>
<dbReference type="RefSeq" id="WP_011824110.1">
    <property type="nucleotide sequence ID" value="NC_008819.1"/>
</dbReference>
<dbReference type="SMR" id="A2C3N0"/>
<dbReference type="KEGG" id="pme:NATL1_15331"/>
<dbReference type="eggNOG" id="COG0817">
    <property type="taxonomic scope" value="Bacteria"/>
</dbReference>
<dbReference type="HOGENOM" id="CLU_091257_3_1_3"/>
<dbReference type="Proteomes" id="UP000002592">
    <property type="component" value="Chromosome"/>
</dbReference>
<dbReference type="GO" id="GO:0005737">
    <property type="term" value="C:cytoplasm"/>
    <property type="evidence" value="ECO:0007669"/>
    <property type="project" value="UniProtKB-SubCell"/>
</dbReference>
<dbReference type="GO" id="GO:0048476">
    <property type="term" value="C:Holliday junction resolvase complex"/>
    <property type="evidence" value="ECO:0007669"/>
    <property type="project" value="UniProtKB-UniRule"/>
</dbReference>
<dbReference type="GO" id="GO:0008821">
    <property type="term" value="F:crossover junction DNA endonuclease activity"/>
    <property type="evidence" value="ECO:0007669"/>
    <property type="project" value="UniProtKB-UniRule"/>
</dbReference>
<dbReference type="GO" id="GO:0003677">
    <property type="term" value="F:DNA binding"/>
    <property type="evidence" value="ECO:0007669"/>
    <property type="project" value="UniProtKB-KW"/>
</dbReference>
<dbReference type="GO" id="GO:0000287">
    <property type="term" value="F:magnesium ion binding"/>
    <property type="evidence" value="ECO:0007669"/>
    <property type="project" value="UniProtKB-UniRule"/>
</dbReference>
<dbReference type="GO" id="GO:0006310">
    <property type="term" value="P:DNA recombination"/>
    <property type="evidence" value="ECO:0007669"/>
    <property type="project" value="UniProtKB-UniRule"/>
</dbReference>
<dbReference type="GO" id="GO:0006281">
    <property type="term" value="P:DNA repair"/>
    <property type="evidence" value="ECO:0007669"/>
    <property type="project" value="UniProtKB-UniRule"/>
</dbReference>
<dbReference type="CDD" id="cd16962">
    <property type="entry name" value="RuvC"/>
    <property type="match status" value="1"/>
</dbReference>
<dbReference type="FunFam" id="3.30.420.10:FF:000002">
    <property type="entry name" value="Crossover junction endodeoxyribonuclease RuvC"/>
    <property type="match status" value="1"/>
</dbReference>
<dbReference type="Gene3D" id="3.30.420.10">
    <property type="entry name" value="Ribonuclease H-like superfamily/Ribonuclease H"/>
    <property type="match status" value="1"/>
</dbReference>
<dbReference type="HAMAP" id="MF_00034">
    <property type="entry name" value="RuvC"/>
    <property type="match status" value="1"/>
</dbReference>
<dbReference type="InterPro" id="IPR012337">
    <property type="entry name" value="RNaseH-like_sf"/>
</dbReference>
<dbReference type="InterPro" id="IPR036397">
    <property type="entry name" value="RNaseH_sf"/>
</dbReference>
<dbReference type="InterPro" id="IPR002176">
    <property type="entry name" value="X-over_junc_endoDNase_RuvC"/>
</dbReference>
<dbReference type="NCBIfam" id="NF000711">
    <property type="entry name" value="PRK00039.2-1"/>
    <property type="match status" value="1"/>
</dbReference>
<dbReference type="NCBIfam" id="TIGR00228">
    <property type="entry name" value="ruvC"/>
    <property type="match status" value="1"/>
</dbReference>
<dbReference type="PANTHER" id="PTHR30194">
    <property type="entry name" value="CROSSOVER JUNCTION ENDODEOXYRIBONUCLEASE RUVC"/>
    <property type="match status" value="1"/>
</dbReference>
<dbReference type="PANTHER" id="PTHR30194:SF3">
    <property type="entry name" value="CROSSOVER JUNCTION ENDODEOXYRIBONUCLEASE RUVC"/>
    <property type="match status" value="1"/>
</dbReference>
<dbReference type="Pfam" id="PF02075">
    <property type="entry name" value="RuvC"/>
    <property type="match status" value="1"/>
</dbReference>
<dbReference type="PRINTS" id="PR00696">
    <property type="entry name" value="RSOLVASERUVC"/>
</dbReference>
<dbReference type="SUPFAM" id="SSF53098">
    <property type="entry name" value="Ribonuclease H-like"/>
    <property type="match status" value="1"/>
</dbReference>
<reference key="1">
    <citation type="journal article" date="2007" name="PLoS Genet.">
        <title>Patterns and implications of gene gain and loss in the evolution of Prochlorococcus.</title>
        <authorList>
            <person name="Kettler G.C."/>
            <person name="Martiny A.C."/>
            <person name="Huang K."/>
            <person name="Zucker J."/>
            <person name="Coleman M.L."/>
            <person name="Rodrigue S."/>
            <person name="Chen F."/>
            <person name="Lapidus A."/>
            <person name="Ferriera S."/>
            <person name="Johnson J."/>
            <person name="Steglich C."/>
            <person name="Church G.M."/>
            <person name="Richardson P."/>
            <person name="Chisholm S.W."/>
        </authorList>
    </citation>
    <scope>NUCLEOTIDE SEQUENCE [LARGE SCALE GENOMIC DNA]</scope>
    <source>
        <strain>NATL1A</strain>
    </source>
</reference>
<keyword id="KW-0963">Cytoplasm</keyword>
<keyword id="KW-0227">DNA damage</keyword>
<keyword id="KW-0233">DNA recombination</keyword>
<keyword id="KW-0234">DNA repair</keyword>
<keyword id="KW-0238">DNA-binding</keyword>
<keyword id="KW-0255">Endonuclease</keyword>
<keyword id="KW-0378">Hydrolase</keyword>
<keyword id="KW-0460">Magnesium</keyword>
<keyword id="KW-0479">Metal-binding</keyword>
<keyword id="KW-0540">Nuclease</keyword>
<protein>
    <recommendedName>
        <fullName evidence="1">Crossover junction endodeoxyribonuclease RuvC</fullName>
        <ecNumber evidence="1">3.1.21.10</ecNumber>
    </recommendedName>
    <alternativeName>
        <fullName evidence="1">Holliday junction nuclease RuvC</fullName>
    </alternativeName>
    <alternativeName>
        <fullName evidence="1">Holliday junction resolvase RuvC</fullName>
    </alternativeName>
</protein>